<accession>P9WIA1</accession>
<accession>L0TAK9</accession>
<accession>P65716</accession>
<accession>Q10507</accession>
<sequence>MSDPLHVTFVCTGNICRSPMAEKMFAQQLRHRGLGDAVRVTSAGTGNWHVGSCADERAAGVLRAHGYPTDHRAAQVGTEHLAADLLVALDRNHARLLRQLGVEAARVRMLRSFDPRSGTHALDVEDPYYGDHSDFEEVFAVIESALPGLHDWVDERLARNGPS</sequence>
<gene>
    <name evidence="24" type="primary">ptpA</name>
    <name evidence="23" type="synonym">mptpA</name>
    <name type="ordered locus">Rv2234</name>
    <name type="ORF">MTCY427.15</name>
</gene>
<keyword id="KW-0002">3D-structure</keyword>
<keyword id="KW-1035">Host cytoplasm</keyword>
<keyword id="KW-1036">Host cytoplasmic vesicle</keyword>
<keyword id="KW-1048">Host nucleus</keyword>
<keyword id="KW-0378">Hydrolase</keyword>
<keyword id="KW-0597">Phosphoprotein</keyword>
<keyword id="KW-0904">Protein phosphatase</keyword>
<keyword id="KW-1185">Reference proteome</keyword>
<keyword id="KW-0702">S-nitrosylation</keyword>
<keyword id="KW-0964">Secreted</keyword>
<keyword id="KW-0843">Virulence</keyword>
<protein>
    <recommendedName>
        <fullName evidence="25">Low molecular weight protein-tyrosine phosphatase A</fullName>
        <shortName evidence="26">LMW-PTP</shortName>
        <shortName evidence="27">PTPase</shortName>
        <ecNumber evidence="1 2 5 14 21">3.1.3.48</ecNumber>
    </recommendedName>
    <alternativeName>
        <fullName evidence="24">Low molecular weight tyrosine phosphatase PtpA</fullName>
    </alternativeName>
    <alternativeName>
        <fullName evidence="23">MPtpA</fullName>
    </alternativeName>
</protein>
<organism>
    <name type="scientific">Mycobacterium tuberculosis (strain ATCC 25618 / H37Rv)</name>
    <dbReference type="NCBI Taxonomy" id="83332"/>
    <lineage>
        <taxon>Bacteria</taxon>
        <taxon>Bacillati</taxon>
        <taxon>Actinomycetota</taxon>
        <taxon>Actinomycetes</taxon>
        <taxon>Mycobacteriales</taxon>
        <taxon>Mycobacteriaceae</taxon>
        <taxon>Mycobacterium</taxon>
        <taxon>Mycobacterium tuberculosis complex</taxon>
    </lineage>
</organism>
<proteinExistence type="evidence at protein level"/>
<feature type="chain" id="PRO_0000046567" description="Low molecular weight protein-tyrosine phosphatase A">
    <location>
        <begin position="1"/>
        <end position="163"/>
    </location>
</feature>
<feature type="region of interest" description="UIM-like region" evidence="22">
    <location>
        <begin position="136"/>
        <end position="149"/>
    </location>
</feature>
<feature type="active site" description="Nucleophile" evidence="28 29">
    <location>
        <position position="11"/>
    </location>
</feature>
<feature type="active site" evidence="28 29">
    <location>
        <position position="17"/>
    </location>
</feature>
<feature type="active site" description="Proton donor" evidence="28 29">
    <location>
        <position position="126"/>
    </location>
</feature>
<feature type="modified residue" description="Phosphothreonine; by PknA" evidence="16">
    <location>
        <position position="45"/>
    </location>
</feature>
<feature type="modified residue" description="S-nitrosocysteine" evidence="10 14">
    <location>
        <position position="53"/>
    </location>
</feature>
<feature type="modified residue" description="Phosphotyrosine" evidence="8 13 16">
    <location>
        <position position="128"/>
    </location>
</feature>
<feature type="modified residue" description="Phosphotyrosine" evidence="8 13 16">
    <location>
        <position position="129"/>
    </location>
</feature>
<feature type="mutagenesis site" description="No change in phosphatase activity." evidence="16">
    <original>T</original>
    <variation>A</variation>
    <location>
        <position position="8"/>
    </location>
</feature>
<feature type="mutagenesis site" description="Loss of phosphatase activity. Inhibits its dephosphorylation activity on human VPS33B. Reduces its effect on phagolysosome fusion in infected macrophages. Does not affect nitrosylation." evidence="6 10">
    <original>C</original>
    <variation>A</variation>
    <location>
        <position position="11"/>
    </location>
</feature>
<feature type="mutagenesis site" description="Loss of phosphatase activity." evidence="1 5">
    <original>C</original>
    <variation>S</variation>
    <location>
        <position position="11"/>
    </location>
</feature>
<feature type="mutagenesis site" description="Strong decrease in phosphatase activity." evidence="16">
    <original>T</original>
    <variation>A</variation>
    <location>
        <position position="12"/>
    </location>
</feature>
<feature type="mutagenesis site" description="Does not affect nitrosylation. 80% decrease in phosphatase activity." evidence="10">
    <original>C</original>
    <variation>A</variation>
    <location>
        <position position="16"/>
    </location>
</feature>
<feature type="mutagenesis site" description="Loss of phosphatase activity. Inhibits its dephosphorylation activity on human VPS33B. 36-fold decrease in catalytic efficiency toward pNPP at pH 7.0." evidence="5 6">
    <original>R</original>
    <variation>A</variation>
    <location>
        <position position="17"/>
    </location>
</feature>
<feature type="mutagenesis site" description="Slight decrease in phosphatase activity." evidence="16">
    <original>T</original>
    <variation>A</variation>
    <location>
        <position position="41"/>
    </location>
</feature>
<feature type="mutagenesis site" description="Slight decrease in phosphatase activity." evidence="16">
    <original>T</original>
    <variation>A</variation>
    <location>
        <position position="45"/>
    </location>
</feature>
<feature type="mutagenesis site" description="Lack of nitrosylation. Does not affect phosphatase activity." evidence="10">
    <original>C</original>
    <variation>A</variation>
    <location>
        <position position="53"/>
    </location>
</feature>
<feature type="mutagenesis site" description="Mutant can be phosphorylated." evidence="8">
    <original>Y</original>
    <variation>A</variation>
    <location>
        <position position="67"/>
    </location>
</feature>
<feature type="mutagenesis site" description="No change in phosphatase activity." evidence="16">
    <original>T</original>
    <variation>A</variation>
    <location>
        <position position="69"/>
    </location>
</feature>
<feature type="mutagenesis site" description="No change in phosphatase activity." evidence="16">
    <original>T</original>
    <variation>A</variation>
    <location>
        <position position="78"/>
    </location>
</feature>
<feature type="mutagenesis site" description="No change in phosphatase activity." evidence="16">
    <original>T</original>
    <variation>A</variation>
    <location>
        <position position="119"/>
    </location>
</feature>
<feature type="mutagenesis site" description="Loss of phosphatase activity. Inhibits its dephosphorylation activity on human VPS33B. Reduces its effect on phagolysosome fusion in infected macrophages. Still binds V-ATPase subunit H. 380-fold decrease in catalytic efficiency toward pNPP at pH 7.0." evidence="5 6 11">
    <original>D</original>
    <variation>A</variation>
    <location>
        <position position="126"/>
    </location>
</feature>
<feature type="mutagenesis site" description="11-fold decrease in catalytic efficiency toward pNPP at pH 7.0." evidence="5">
    <original>D</original>
    <variation>N</variation>
    <location>
        <position position="126"/>
    </location>
</feature>
<feature type="mutagenesis site" description="Mutant can be phosphorylated. Lack of phosphorylation and loss of phosphatase activity; when associated with A-129." evidence="8 16">
    <original>Y</original>
    <variation>A</variation>
    <location>
        <position position="128"/>
    </location>
</feature>
<feature type="mutagenesis site" description="Loss of phosphatase activity; when associated with E-129." evidence="16">
    <original>Y</original>
    <variation>E</variation>
    <location>
        <position position="128"/>
    </location>
</feature>
<feature type="mutagenesis site" description="Mutant can be phosphorylated. Lack of phosphorylation and loss of phosphatase activity; when associated with A-128." evidence="8 16">
    <original>Y</original>
    <variation>A</variation>
    <location>
        <position position="129"/>
    </location>
</feature>
<feature type="mutagenesis site" description="Loss of phosphatase activity; when associated with E-128." evidence="16">
    <original>Y</original>
    <variation>E</variation>
    <location>
        <position position="129"/>
    </location>
</feature>
<feature type="mutagenesis site" description="No longer binds to ubiquitin. Abolishes the Jnk- and p38-dependent production of TNF and IL-1-beta in macrophages. Also abolishes the PtpA-mediated inhibition of phagosome acidification." evidence="17">
    <original>A</original>
    <variation>E</variation>
    <location>
        <position position="140"/>
    </location>
</feature>
<feature type="mutagenesis site" description="Retains phosphatase activity but does not bind V-ATPase subunit H. Fails to inhibit V-ATPase trafficking to phagosomes and shows impaired intracellular survival." evidence="11">
    <original>L</original>
    <variation>A</variation>
    <location>
        <position position="146"/>
    </location>
</feature>
<feature type="strand" evidence="33">
    <location>
        <begin position="5"/>
        <end position="16"/>
    </location>
</feature>
<feature type="helix" evidence="33">
    <location>
        <begin position="17"/>
        <end position="31"/>
    </location>
</feature>
<feature type="turn" evidence="33">
    <location>
        <begin position="35"/>
        <end position="37"/>
    </location>
</feature>
<feature type="strand" evidence="33">
    <location>
        <begin position="38"/>
        <end position="46"/>
    </location>
</feature>
<feature type="turn" evidence="33">
    <location>
        <begin position="48"/>
        <end position="51"/>
    </location>
</feature>
<feature type="helix" evidence="33">
    <location>
        <begin position="56"/>
        <end position="64"/>
    </location>
</feature>
<feature type="helix" evidence="33">
    <location>
        <begin position="78"/>
        <end position="81"/>
    </location>
</feature>
<feature type="strand" evidence="33">
    <location>
        <begin position="83"/>
        <end position="90"/>
    </location>
</feature>
<feature type="helix" evidence="33">
    <location>
        <begin position="91"/>
        <end position="99"/>
    </location>
</feature>
<feature type="helix" evidence="33">
    <location>
        <begin position="104"/>
        <end position="106"/>
    </location>
</feature>
<feature type="strand" evidence="33">
    <location>
        <begin position="107"/>
        <end position="109"/>
    </location>
</feature>
<feature type="helix" evidence="33">
    <location>
        <begin position="110"/>
        <end position="113"/>
    </location>
</feature>
<feature type="helix" evidence="33">
    <location>
        <begin position="132"/>
        <end position="158"/>
    </location>
</feature>
<reference key="1">
    <citation type="journal article" date="1998" name="Nature">
        <title>Deciphering the biology of Mycobacterium tuberculosis from the complete genome sequence.</title>
        <authorList>
            <person name="Cole S.T."/>
            <person name="Brosch R."/>
            <person name="Parkhill J."/>
            <person name="Garnier T."/>
            <person name="Churcher C.M."/>
            <person name="Harris D.E."/>
            <person name="Gordon S.V."/>
            <person name="Eiglmeier K."/>
            <person name="Gas S."/>
            <person name="Barry C.E. III"/>
            <person name="Tekaia F."/>
            <person name="Badcock K."/>
            <person name="Basham D."/>
            <person name="Brown D."/>
            <person name="Chillingworth T."/>
            <person name="Connor R."/>
            <person name="Davies R.M."/>
            <person name="Devlin K."/>
            <person name="Feltwell T."/>
            <person name="Gentles S."/>
            <person name="Hamlin N."/>
            <person name="Holroyd S."/>
            <person name="Hornsby T."/>
            <person name="Jagels K."/>
            <person name="Krogh A."/>
            <person name="McLean J."/>
            <person name="Moule S."/>
            <person name="Murphy L.D."/>
            <person name="Oliver S."/>
            <person name="Osborne J."/>
            <person name="Quail M.A."/>
            <person name="Rajandream M.A."/>
            <person name="Rogers J."/>
            <person name="Rutter S."/>
            <person name="Seeger K."/>
            <person name="Skelton S."/>
            <person name="Squares S."/>
            <person name="Squares R."/>
            <person name="Sulston J.E."/>
            <person name="Taylor K."/>
            <person name="Whitehead S."/>
            <person name="Barrell B.G."/>
        </authorList>
    </citation>
    <scope>NUCLEOTIDE SEQUENCE [LARGE SCALE GENOMIC DNA]</scope>
    <source>
        <strain>ATCC 25618 / H37Rv</strain>
    </source>
</reference>
<reference key="2">
    <citation type="journal article" date="2000" name="J. Bacteriol.">
        <title>Cloning and characterization of secretory tyrosine phosphatases of Mycobacterium tuberculosis.</title>
        <authorList>
            <person name="Koul A."/>
            <person name="Choidas A."/>
            <person name="Treder M."/>
            <person name="Tyagi A.K."/>
            <person name="Drlica K."/>
            <person name="Singh Y."/>
            <person name="Ullrich A."/>
        </authorList>
    </citation>
    <scope>FUNCTION</scope>
    <scope>CATALYTIC ACTIVITY</scope>
    <scope>ACTIVITY REGULATION</scope>
    <scope>SUBCELLULAR LOCATION</scope>
    <scope>MUTAGENESIS OF CYS-11</scope>
    <source>
        <strain>H37Rv</strain>
    </source>
</reference>
<reference key="3">
    <citation type="journal article" date="2002" name="Res. Microbiol.">
        <title>Expression and localization of the Mycobacterium tuberculosis protein tyrosine phosphatase PtpA.</title>
        <authorList>
            <person name="Cowley S.C."/>
            <person name="Babakaiff R."/>
            <person name="Av-Gay Y."/>
        </authorList>
    </citation>
    <scope>FUNCTION</scope>
    <scope>CATALYTIC ACTIVITY</scope>
    <scope>BIOPHYSICOCHEMICAL PROPERTIES</scope>
    <scope>SUBCELLULAR LOCATION</scope>
    <scope>INDUCTION</scope>
    <source>
        <strain>H37Rv</strain>
    </source>
</reference>
<reference key="4">
    <citation type="journal article" date="2005" name="Res. Microbiol.">
        <title>Tyrosine phosphatase MptpA of Mycobacterium tuberculosis inhibits phagocytosis and increases actin polymerization in macrophages.</title>
        <authorList>
            <person name="Castandet J."/>
            <person name="Prost J.F."/>
            <person name="Peyron P."/>
            <person name="Astarie-Dequeker C."/>
            <person name="Anes E."/>
            <person name="Cozzone A.J."/>
            <person name="Griffiths G."/>
            <person name="Maridonneau-Parini I."/>
        </authorList>
    </citation>
    <scope>FUNCTION IN VIRULENCE</scope>
    <source>
        <strain>H37Rv</strain>
    </source>
</reference>
<reference key="5">
    <citation type="journal article" date="2005" name="ChemBioChem">
        <title>Discovery of Mycobacterium tuberculosis protein tyrosine phosphatase A (MptpA) inhibitors based on natural products and a fragment-based approach.</title>
        <authorList>
            <person name="Manger M."/>
            <person name="Scheck M."/>
            <person name="Prinz H."/>
            <person name="von Kries J.P."/>
            <person name="Langer T."/>
            <person name="Saxena K."/>
            <person name="Schwalbe H."/>
            <person name="Fuerstner A."/>
            <person name="Rademann J."/>
            <person name="Waldmann H."/>
        </authorList>
    </citation>
    <scope>BIOTECHNOLOGY</scope>
</reference>
<reference key="6">
    <citation type="journal article" date="2008" name="Proteins">
        <title>Analyzing the catalytic mechanism of MPtpA: a low molecular weight protein tyrosine phosphatase from Mycobacterium tuberculosis through site-directed mutagenesis.</title>
        <authorList>
            <person name="Madhurantakam C."/>
            <person name="Chavali V.R."/>
            <person name="Das A.K."/>
        </authorList>
    </citation>
    <scope>FUNCTION</scope>
    <scope>CATALYTIC ACTIVITY</scope>
    <scope>ACTIVITY REGULATION</scope>
    <scope>BIOPHYSICOCHEMICAL PROPERTIES</scope>
    <scope>ACTIVE SITE</scope>
    <scope>MUTAGENESIS OF CYS-11; ARG-17 AND ASP-126</scope>
</reference>
<reference key="7">
    <citation type="journal article" date="2008" name="Cell Host Microbe">
        <title>Mycobacterium tuberculosis virulence is mediated by PtpA dephosphorylation of human vacuolar protein sorting 33B.</title>
        <authorList>
            <person name="Bach H."/>
            <person name="Papavinasasundaram K.G."/>
            <person name="Wong D."/>
            <person name="Hmama Z."/>
            <person name="Av-Gay Y."/>
        </authorList>
    </citation>
    <scope>FUNCTION IN VIRULENCE</scope>
    <scope>INTERACTION WITH HUMAN VPS33B</scope>
    <scope>SUBCELLULAR LOCATION</scope>
    <scope>DISRUPTION PHENOTYPE</scope>
    <scope>MUTAGENESIS OF CYS-11; ARG-17 AND ASP-126</scope>
    <source>
        <strain>ATCC 25618 / H37Rv</strain>
    </source>
</reference>
<reference key="8">
    <citation type="journal article" date="2008" name="FEMS Microbiol. Lett.">
        <title>Protein tyrosine phosphatase PtpA is not required for Mycobacterium tuberculosis growth in mice.</title>
        <authorList>
            <person name="Grundner C."/>
            <person name="Cox J.S."/>
            <person name="Alber T."/>
        </authorList>
    </citation>
    <scope>DISRUPTION PHENOTYPE</scope>
</reference>
<reference key="9">
    <citation type="journal article" date="2009" name="Biochem. J.">
        <title>Mycobacterium tuberculosis PtkA is a novel protein tyrosine kinase whose substrate is PtpA.</title>
        <authorList>
            <person name="Bach H."/>
            <person name="Wong D."/>
            <person name="Av-Gay Y."/>
        </authorList>
    </citation>
    <scope>PHOSPHORYLATION AT TYR-128 AND TYR-129</scope>
    <scope>MUTAGENESIS OF TYR-67; TYR-128 AND TYR-129</scope>
</reference>
<reference key="10">
    <citation type="journal article" date="2009" name="Bioorg. Med. Chem. Lett.">
        <title>Fragment-based discovery of selective inhibitors of the Mycobacterium tuberculosis protein tyrosine phosphatase PtpA.</title>
        <authorList>
            <person name="Rawls K.A."/>
            <person name="Lang P.T."/>
            <person name="Takeuchi J."/>
            <person name="Imamura S."/>
            <person name="Baguley T.D."/>
            <person name="Grundner C."/>
            <person name="Alber T."/>
            <person name="Ellman J.A."/>
        </authorList>
    </citation>
    <scope>BIOTECHNOLOGY</scope>
</reference>
<reference key="11">
    <citation type="journal article" date="2010" name="Chem. Commun. (Camb.)">
        <title>Mycobacterium tuberculosis tyrosine phosphatase A (PtpA) activity is modulated by S-nitrosylation.</title>
        <authorList>
            <person name="Ecco G."/>
            <person name="Vernal J."/>
            <person name="Razzera G."/>
            <person name="Martins P.A."/>
            <person name="Matiollo C."/>
            <person name="Terenzi H."/>
        </authorList>
    </citation>
    <scope>S-NITROSYLATION AT CYS-53</scope>
    <scope>ACTIVITY REGULATION</scope>
    <scope>MUTAGENESIS OF CYS-11; CYS-16 AND CYS-53</scope>
</reference>
<reference key="12">
    <citation type="journal article" date="2011" name="Mol. Cell. Proteomics">
        <title>Proteogenomic analysis of Mycobacterium tuberculosis by high resolution mass spectrometry.</title>
        <authorList>
            <person name="Kelkar D.S."/>
            <person name="Kumar D."/>
            <person name="Kumar P."/>
            <person name="Balakrishnan L."/>
            <person name="Muthusamy B."/>
            <person name="Yadav A.K."/>
            <person name="Shrivastava P."/>
            <person name="Marimuthu A."/>
            <person name="Anand S."/>
            <person name="Sundaram H."/>
            <person name="Kingsbury R."/>
            <person name="Harsha H.C."/>
            <person name="Nair B."/>
            <person name="Prasad T.S."/>
            <person name="Chauhan D.S."/>
            <person name="Katoch K."/>
            <person name="Katoch V.M."/>
            <person name="Kumar P."/>
            <person name="Chaerkady R."/>
            <person name="Ramachandran S."/>
            <person name="Dash D."/>
            <person name="Pandey A."/>
        </authorList>
    </citation>
    <scope>IDENTIFICATION BY MASS SPECTROMETRY [LARGE SCALE ANALYSIS]</scope>
    <source>
        <strain>ATCC 25618 / H37Rv</strain>
    </source>
</reference>
<reference key="13">
    <citation type="journal article" date="2011" name="Proc. Natl. Acad. Sci. U.S.A.">
        <title>Mycobacterium tuberculosis protein tyrosine phosphatase (PtpA) excludes host vacuolar-H+-ATPase to inhibit phagosome acidification.</title>
        <authorList>
            <person name="Wong D."/>
            <person name="Bach H."/>
            <person name="Sun J."/>
            <person name="Hmama Z."/>
            <person name="Av-Gay Y."/>
        </authorList>
    </citation>
    <scope>FUNCTION IN VIRULENCE</scope>
    <scope>INTERACTION WITH HOST V-ATPASE</scope>
    <scope>MUTAGENESIS OF ASP-126 AND LEU-146</scope>
</reference>
<reference key="14">
    <citation type="journal article" date="2012" name="J. Med. Chem.">
        <title>Synthesis, biological evaluation, and molecular modeling of chalcone derivatives as potent inhibitors of Mycobacterium tuberculosis protein tyrosine phosphatases (PtpA and PtpB).</title>
        <authorList>
            <person name="Chiaradia L.D."/>
            <person name="Martins P.G."/>
            <person name="Cordeiro M.N."/>
            <person name="Guido R.V."/>
            <person name="Ecco G."/>
            <person name="Andricopulo A.D."/>
            <person name="Yunes R.A."/>
            <person name="Vernal J."/>
            <person name="Nunes R.J."/>
            <person name="Terenzi H."/>
        </authorList>
    </citation>
    <scope>BIOTECHNOLOGY</scope>
</reference>
<reference key="15">
    <citation type="journal article" date="2013" name="Biochim. Biophys. Acta">
        <title>S-nitrosylation of Mycobacterium tuberculosis tyrosine phosphatase A (PtpA) induces its structural instability.</title>
        <authorList>
            <person name="Matiollo C."/>
            <person name="Ecco G."/>
            <person name="Menegatti A.C."/>
            <person name="Razzera G."/>
            <person name="Vernal J."/>
            <person name="Terenzi H."/>
        </authorList>
    </citation>
    <scope>FUNCTION</scope>
    <scope>CATALYTIC ACTIVITY</scope>
    <scope>ACTIVITY REGULATION</scope>
    <scope>BIOPHYSICOCHEMICAL PROPERTIES</scope>
    <scope>S-NITROSYLATION AT CYS-53</scope>
</reference>
<reference key="16">
    <citation type="journal article" date="2014" name="J. Biol. Chem.">
        <title>Mycobacterium tuberculosis promotes anti-apoptotic activity of the macrophage by PtpA protein-dependent dephosphorylation of host GSK3alpha.</title>
        <authorList>
            <person name="Poirier V."/>
            <person name="Bach H."/>
            <person name="Av-Gay Y."/>
        </authorList>
    </citation>
    <scope>FUNCTION IN VIRULENCE</scope>
    <scope>INTERACTION WITH HOST GSK-3 ALPHA</scope>
</reference>
<reference key="17">
    <citation type="journal article" date="2015" name="FEBS Lett.">
        <title>Phosphorylation control of protein tyrosine phosphatase A activity in Mycobacterium tuberculosis.</title>
        <authorList>
            <person name="Zhou P."/>
            <person name="Li W."/>
            <person name="Wong D."/>
            <person name="Xie J."/>
            <person name="Av-Gay Y."/>
        </authorList>
    </citation>
    <scope>ACTIVITY REGULATION</scope>
    <scope>PHOSPHORYLATION AT THR-45; TYR-128 AND TYR-129</scope>
    <scope>MUTAGENESIS OF THR-8; THR-12; THR-41; THR-45; THR-69; THR-78; THR-119; TYR-128 AND TYR-129</scope>
</reference>
<reference key="18">
    <citation type="journal article" date="2015" name="Nat. Immunol.">
        <title>Mycobacterium tuberculosis suppresses innate immunity by coopting the host ubiquitin system.</title>
        <authorList>
            <person name="Wang J."/>
            <person name="Li B.X."/>
            <person name="Ge P.P."/>
            <person name="Li J."/>
            <person name="Wang Q."/>
            <person name="Gao G.F."/>
            <person name="Qiu X.B."/>
            <person name="Liu C.H."/>
        </authorList>
    </citation>
    <scope>FUNCTION IN VIRULENCE</scope>
    <scope>INTERACTION WITH HOST UBIQUITIN AND HOST TAB3</scope>
    <scope>MUTAGENESIS OF ALA-140</scope>
</reference>
<reference key="19">
    <citation type="journal article" date="2015" name="Sci. Rep.">
        <title>New potential eukaryotic substrates of the mycobacterial protein tyrosine phosphatase PtpA: hints of a bacterial modulation of macrophage bioenergetics state.</title>
        <authorList>
            <person name="Margenat M."/>
            <person name="Labandera A.M."/>
            <person name="Gil M."/>
            <person name="Carrion F."/>
            <person name="Purificacao M."/>
            <person name="Razzera G."/>
            <person name="Portela M.M."/>
            <person name="Obal G."/>
            <person name="Terenzi H."/>
            <person name="Pritsch O."/>
            <person name="Duran R."/>
            <person name="Ferreira A.M."/>
            <person name="Villarino A."/>
        </authorList>
    </citation>
    <scope>FUNCTION</scope>
</reference>
<reference key="20">
    <citation type="journal article" date="2016" name="Sci. Rep.">
        <title>The ubiquitin ligase TRIM27 functions as a host restriction factor antagonized by Mycobacterium tuberculosis PtpA during mycobacterial infection.</title>
        <authorList>
            <person name="Wang J."/>
            <person name="Teng J.L."/>
            <person name="Zhao D."/>
            <person name="Ge P."/>
            <person name="Li B."/>
            <person name="Woo P.C."/>
            <person name="Liu C.H."/>
        </authorList>
    </citation>
    <scope>FUNCTION IN VIRULENCE</scope>
    <scope>INTERACTION WITH HOST TRIM27</scope>
</reference>
<reference key="21">
    <citation type="journal article" date="2017" name="Nat. Commun.">
        <title>The mycobacterial phosphatase PtpA regulates the expression of host genes and promotes cell proliferation.</title>
        <authorList>
            <person name="Wang J."/>
            <person name="Ge P."/>
            <person name="Qiang L."/>
            <person name="Tian F."/>
            <person name="Zhao D."/>
            <person name="Chai Q."/>
            <person name="Zhu M."/>
            <person name="Zhou R."/>
            <person name="Meng G."/>
            <person name="Iwakura Y."/>
            <person name="Gao G.F."/>
            <person name="Liu C.H."/>
        </authorList>
    </citation>
    <scope>FUNCTION IN VIRULENCE</scope>
    <scope>DNA-BINDING</scope>
    <scope>SUBCELLULAR LOCATION</scope>
</reference>
<reference key="22">
    <citation type="journal article" date="2020" name="Biochemistry">
        <title>Substrate activation of the low-molecular weight protein tyrosine phosphatase from Mycobacterium tuberculosis.</title>
        <authorList>
            <person name="Stefan A."/>
            <person name="Dal Piaz F."/>
            <person name="Girella A."/>
            <person name="Hochkoeppler A."/>
        </authorList>
    </citation>
    <scope>FUNCTION</scope>
    <scope>CATALYTIC ACTIVITY</scope>
    <scope>ACTIVITY REGULATION</scope>
    <scope>BIOPHYSICOCHEMICAL PROPERTIES</scope>
    <scope>DOMAIN</scope>
</reference>
<reference key="23">
    <citation type="journal article" date="2022" name="Science">
        <title>A bacterial phospholipid phosphatase inhibits host pyroptosis by hijacking ubiquitin.</title>
        <authorList>
            <person name="Chai Q."/>
            <person name="Yu S."/>
            <person name="Zhong Y."/>
            <person name="Lu Z."/>
            <person name="Qiu C."/>
            <person name="Yu Y."/>
            <person name="Zhang X."/>
            <person name="Zhang Y."/>
            <person name="Lei Z."/>
            <person name="Qiang L."/>
            <person name="Li B.X."/>
            <person name="Pang Y."/>
            <person name="Qiu X.B."/>
            <person name="Wang J."/>
            <person name="Liu C.H."/>
        </authorList>
    </citation>
    <scope>INTERACTION WITH HOST UBIQUITIN</scope>
    <scope>DOMAIN</scope>
</reference>
<reference key="24">
    <citation type="journal article" date="2013" name="Trends Microbiol.">
        <title>Mycobacterium tuberculosis-secreted phosphatases: from pathogenesis to targets for TB drug development.</title>
        <authorList>
            <person name="Wong D."/>
            <person name="Chao J.D."/>
            <person name="Av-Gay Y."/>
        </authorList>
    </citation>
    <scope>REVIEW</scope>
</reference>
<reference evidence="30 31" key="25">
    <citation type="journal article" date="2005" name="J. Bacteriol.">
        <title>Crystal structure of low-molecular-weight protein tyrosine phosphatase from Mycobacterium tuberculosis at 1.9-A resolution.</title>
        <authorList>
            <person name="Madhurantakam C."/>
            <person name="Rajakumara E."/>
            <person name="Mazumdar P.A."/>
            <person name="Saha B."/>
            <person name="Mitra D."/>
            <person name="Wiker H.G."/>
            <person name="Sankaranarayanan R."/>
            <person name="Das A.K."/>
        </authorList>
    </citation>
    <scope>X-RAY CRYSTALLOGRAPHY (1.90 ANGSTROMS)</scope>
    <scope>ACTIVE SITE</scope>
    <source>
        <strain>H37Rv</strain>
    </source>
</reference>
<reference key="26">
    <citation type="journal article" date="2005" name="J. Biomol. NMR">
        <title>Backbone NMR assignment of the low-molecular-weight protein tyrosine phosphatase (MPtpA) from Mycobacterium tuberculosis.</title>
        <authorList>
            <person name="Saxena K."/>
            <person name="Elshorst B."/>
            <person name="Berk H."/>
            <person name="Betz M."/>
            <person name="Grimme S."/>
            <person name="Langer T."/>
            <person name="Pescatore B."/>
            <person name="Schieborr U."/>
            <person name="Vogtherr M."/>
            <person name="Schwalbe H."/>
        </authorList>
    </citation>
    <scope>STRUCTURE BY NMR</scope>
</reference>
<reference evidence="32" key="27">
    <citation type="journal article" date="2012" name="J. Biol. Chem.">
        <title>The apo-structure of the low molecular weight protein-tyrosine phosphatase A (MptpA) from Mycobacterium tuberculosis allows for better target-specific drug development.</title>
        <authorList>
            <person name="Stehle T."/>
            <person name="Sreeramulu S."/>
            <person name="Lohr F."/>
            <person name="Richter C."/>
            <person name="Saxena K."/>
            <person name="Jonker H.R."/>
            <person name="Schwalbe H."/>
        </authorList>
    </citation>
    <scope>STRUCTURE BY NMR</scope>
    <scope>PHOSPHORYLATION AT TYR-128 AND TYR-129</scope>
    <scope>DOMAIN</scope>
</reference>
<evidence type="ECO:0000269" key="1">
    <source>
    </source>
</evidence>
<evidence type="ECO:0000269" key="2">
    <source>
    </source>
</evidence>
<evidence type="ECO:0000269" key="3">
    <source>
    </source>
</evidence>
<evidence type="ECO:0000269" key="4">
    <source>
    </source>
</evidence>
<evidence type="ECO:0000269" key="5">
    <source>
    </source>
</evidence>
<evidence type="ECO:0000269" key="6">
    <source>
    </source>
</evidence>
<evidence type="ECO:0000269" key="7">
    <source>
    </source>
</evidence>
<evidence type="ECO:0000269" key="8">
    <source>
    </source>
</evidence>
<evidence type="ECO:0000269" key="9">
    <source>
    </source>
</evidence>
<evidence type="ECO:0000269" key="10">
    <source>
    </source>
</evidence>
<evidence type="ECO:0000269" key="11">
    <source>
    </source>
</evidence>
<evidence type="ECO:0000269" key="12">
    <source>
    </source>
</evidence>
<evidence type="ECO:0000269" key="13">
    <source>
    </source>
</evidence>
<evidence type="ECO:0000269" key="14">
    <source>
    </source>
</evidence>
<evidence type="ECO:0000269" key="15">
    <source>
    </source>
</evidence>
<evidence type="ECO:0000269" key="16">
    <source>
    </source>
</evidence>
<evidence type="ECO:0000269" key="17">
    <source>
    </source>
</evidence>
<evidence type="ECO:0000269" key="18">
    <source>
    </source>
</evidence>
<evidence type="ECO:0000269" key="19">
    <source>
    </source>
</evidence>
<evidence type="ECO:0000269" key="20">
    <source>
    </source>
</evidence>
<evidence type="ECO:0000269" key="21">
    <source>
    </source>
</evidence>
<evidence type="ECO:0000269" key="22">
    <source>
    </source>
</evidence>
<evidence type="ECO:0000303" key="23">
    <source>
    </source>
</evidence>
<evidence type="ECO:0000303" key="24">
    <source>
    </source>
</evidence>
<evidence type="ECO:0000303" key="25">
    <source>
    </source>
</evidence>
<evidence type="ECO:0000303" key="26">
    <source>
    </source>
</evidence>
<evidence type="ECO:0000305" key="27"/>
<evidence type="ECO:0000305" key="28">
    <source>
    </source>
</evidence>
<evidence type="ECO:0000305" key="29">
    <source>
    </source>
</evidence>
<evidence type="ECO:0007744" key="30">
    <source>
        <dbReference type="PDB" id="1U2P"/>
    </source>
</evidence>
<evidence type="ECO:0007744" key="31">
    <source>
        <dbReference type="PDB" id="1U2Q"/>
    </source>
</evidence>
<evidence type="ECO:0007744" key="32">
    <source>
        <dbReference type="PDB" id="2LUO"/>
    </source>
</evidence>
<evidence type="ECO:0007829" key="33">
    <source>
        <dbReference type="PDB" id="1U2P"/>
    </source>
</evidence>
<dbReference type="EC" id="3.1.3.48" evidence="1 2 5 14 21"/>
<dbReference type="EMBL" id="AL123456">
    <property type="protein sequence ID" value="CCP45013.1"/>
    <property type="molecule type" value="Genomic_DNA"/>
</dbReference>
<dbReference type="PIR" id="F70777">
    <property type="entry name" value="F70777"/>
</dbReference>
<dbReference type="RefSeq" id="NP_216750.1">
    <property type="nucleotide sequence ID" value="NC_000962.3"/>
</dbReference>
<dbReference type="RefSeq" id="WP_003411510.1">
    <property type="nucleotide sequence ID" value="NZ_NVQJ01000008.1"/>
</dbReference>
<dbReference type="PDB" id="1U2P">
    <property type="method" value="X-ray"/>
    <property type="resolution" value="1.90 A"/>
    <property type="chains" value="A=1-163"/>
</dbReference>
<dbReference type="PDB" id="1U2Q">
    <property type="method" value="X-ray"/>
    <property type="resolution" value="2.50 A"/>
    <property type="chains" value="A=1-163"/>
</dbReference>
<dbReference type="PDB" id="2LUO">
    <property type="method" value="NMR"/>
    <property type="chains" value="A=1-163"/>
</dbReference>
<dbReference type="PDBsum" id="1U2P"/>
<dbReference type="PDBsum" id="1U2Q"/>
<dbReference type="PDBsum" id="2LUO"/>
<dbReference type="BMRB" id="P9WIA1"/>
<dbReference type="SMR" id="P9WIA1"/>
<dbReference type="BioGRID" id="4356823">
    <property type="interactions" value="8"/>
</dbReference>
<dbReference type="FunCoup" id="P9WIA1">
    <property type="interactions" value="374"/>
</dbReference>
<dbReference type="STRING" id="83332.Rv2234"/>
<dbReference type="BindingDB" id="P9WIA1"/>
<dbReference type="ChEMBL" id="CHEMBL4542"/>
<dbReference type="iPTMnet" id="P9WIA1"/>
<dbReference type="PaxDb" id="83332-Rv2234"/>
<dbReference type="DNASU" id="887373"/>
<dbReference type="GeneID" id="45426212"/>
<dbReference type="GeneID" id="887373"/>
<dbReference type="KEGG" id="mtu:Rv2234"/>
<dbReference type="KEGG" id="mtv:RVBD_2234"/>
<dbReference type="TubercuList" id="Rv2234"/>
<dbReference type="eggNOG" id="COG0394">
    <property type="taxonomic scope" value="Bacteria"/>
</dbReference>
<dbReference type="InParanoid" id="P9WIA1"/>
<dbReference type="OrthoDB" id="9784339at2"/>
<dbReference type="PhylomeDB" id="P9WIA1"/>
<dbReference type="BRENDA" id="3.1.3.48">
    <property type="organism ID" value="3445"/>
</dbReference>
<dbReference type="Reactome" id="R-HSA-9635465">
    <property type="pathway name" value="Suppression of apoptosis"/>
</dbReference>
<dbReference type="Reactome" id="R-HSA-9636383">
    <property type="pathway name" value="Prevention of phagosomal-lysosomal fusion"/>
</dbReference>
<dbReference type="Reactome" id="R-HSA-9636467">
    <property type="pathway name" value="Blockage of phagosome acidification"/>
</dbReference>
<dbReference type="Reactome" id="R-HSA-9637628">
    <property type="pathway name" value="Modulation by Mtb of host immune system"/>
</dbReference>
<dbReference type="EvolutionaryTrace" id="P9WIA1"/>
<dbReference type="PRO" id="PR:P9WIA1"/>
<dbReference type="Proteomes" id="UP000001584">
    <property type="component" value="Chromosome"/>
</dbReference>
<dbReference type="GO" id="GO:0005829">
    <property type="term" value="C:cytosol"/>
    <property type="evidence" value="ECO:0000304"/>
    <property type="project" value="Reactome"/>
</dbReference>
<dbReference type="GO" id="GO:0005576">
    <property type="term" value="C:extracellular region"/>
    <property type="evidence" value="ECO:0000314"/>
    <property type="project" value="MTBBASE"/>
</dbReference>
<dbReference type="GO" id="GO:0044161">
    <property type="term" value="C:host cell cytoplasmic vesicle"/>
    <property type="evidence" value="ECO:0007669"/>
    <property type="project" value="UniProtKB-SubCell"/>
</dbReference>
<dbReference type="GO" id="GO:0042025">
    <property type="term" value="C:host cell nucleus"/>
    <property type="evidence" value="ECO:0007669"/>
    <property type="project" value="UniProtKB-SubCell"/>
</dbReference>
<dbReference type="GO" id="GO:0005886">
    <property type="term" value="C:plasma membrane"/>
    <property type="evidence" value="ECO:0007005"/>
    <property type="project" value="MTBBASE"/>
</dbReference>
<dbReference type="GO" id="GO:0004725">
    <property type="term" value="F:protein tyrosine phosphatase activity"/>
    <property type="evidence" value="ECO:0000314"/>
    <property type="project" value="MTBBASE"/>
</dbReference>
<dbReference type="GO" id="GO:0052067">
    <property type="term" value="P:symbiont-mediated perturbation of host phagocytosis"/>
    <property type="evidence" value="ECO:0000315"/>
    <property type="project" value="MTBBASE"/>
</dbReference>
<dbReference type="GO" id="GO:0033668">
    <property type="term" value="P:symbiont-mediated suppression of host apoptosis"/>
    <property type="evidence" value="ECO:0000304"/>
    <property type="project" value="Reactome"/>
</dbReference>
<dbReference type="GO" id="GO:0052170">
    <property type="term" value="P:symbiont-mediated suppression of host innate immune response"/>
    <property type="evidence" value="ECO:0000315"/>
    <property type="project" value="UniProtKB"/>
</dbReference>
<dbReference type="GO" id="GO:0141159">
    <property type="term" value="P:symbiont-mediated suppression of host phagosome acidification"/>
    <property type="evidence" value="ECO:0000269"/>
    <property type="project" value="SigSci"/>
</dbReference>
<dbReference type="CDD" id="cd16343">
    <property type="entry name" value="LMWPTP"/>
    <property type="match status" value="1"/>
</dbReference>
<dbReference type="Gene3D" id="3.40.50.2300">
    <property type="match status" value="1"/>
</dbReference>
<dbReference type="InterPro" id="IPR050438">
    <property type="entry name" value="LMW_PTPase"/>
</dbReference>
<dbReference type="InterPro" id="IPR023485">
    <property type="entry name" value="Ptyr_pPase"/>
</dbReference>
<dbReference type="InterPro" id="IPR036196">
    <property type="entry name" value="Ptyr_pPase_sf"/>
</dbReference>
<dbReference type="InterPro" id="IPR017867">
    <property type="entry name" value="Tyr_phospatase_low_mol_wt"/>
</dbReference>
<dbReference type="PANTHER" id="PTHR11717:SF7">
    <property type="entry name" value="LOW MOLECULAR WEIGHT PHOSPHOTYROSINE PROTEIN PHOSPHATASE"/>
    <property type="match status" value="1"/>
</dbReference>
<dbReference type="PANTHER" id="PTHR11717">
    <property type="entry name" value="LOW MOLECULAR WEIGHT PROTEIN TYROSINE PHOSPHATASE"/>
    <property type="match status" value="1"/>
</dbReference>
<dbReference type="Pfam" id="PF01451">
    <property type="entry name" value="LMWPc"/>
    <property type="match status" value="1"/>
</dbReference>
<dbReference type="PRINTS" id="PR00719">
    <property type="entry name" value="LMWPTPASE"/>
</dbReference>
<dbReference type="SMART" id="SM00226">
    <property type="entry name" value="LMWPc"/>
    <property type="match status" value="1"/>
</dbReference>
<dbReference type="SUPFAM" id="SSF52788">
    <property type="entry name" value="Phosphotyrosine protein phosphatases I"/>
    <property type="match status" value="1"/>
</dbReference>
<comment type="function">
    <text evidence="1 2 3 5 6 11 14 15 17 19 21">Key virulence factor required for mycobacterial survival within host macrophages (PubMed:16085396, PubMed:18474358, PubMed:22087003, PubMed:25187516, PubMed:25642820, PubMed:27698396). Exhibits protein tyrosine phosphatase activity (PubMed:10986245, PubMed:12066895, PubMed:17975835, PubMed:23102706, PubMed:25187516, PubMed:32142609). Shows no detectable activity towards substrates containing phosphoserine/threonine residues (PubMed:10986245, PubMed:12066895).</text>
</comment>
<comment type="function">
    <text evidence="3 6 11 15 17 18 19 20">Supports mycobacteria survival during infection by modulation of the phagosome maturation and modulation of the normal host signaling pathways, including host innate immune responses and cell apoptosis (PubMed:18474358, PubMed:22087003, PubMed:25187516, PubMed:25642820, PubMed:27698396). Affects the phagocytosis process by preventing phagosome acidification and maturation in the macrophage (PubMed:16085396, PubMed:18474358, PubMed:22087003). This inhibition depends on both PtpA phosphatase activity and its ability to bind to host vacuolar-H(+)-ATPase (V-ATPase) machinery (PubMed:22087003). Enters into the host cytosol and binds to subunit H of the human V-ATPase machinery to block V-ATPase trafficking and phagosome acidification (PubMed:22087003). Dephosphorylates and inactivates host VPS33B protein, which inhibits phagosome maturation, fusion with the lysosome and promotes bacteria survival (PubMed:18474358, PubMed:22087003). Dephosphorylation of VPS33B requires interaction of PtpA with host V-ATPase and ubiquitin (PubMed:22087003, PubMed:25642820). Binding to host ubiquitin also leads to the dephosphorylation of phosphorylated Jnk and MAPK p38, leading to suppression of innate immunity (PubMed:25642820). Dephosphorylates host GSK-3 alpha on Tyr-279, which leads to modulation of GSK-3 alpha anti-apoptotic activity, promoting pathogen survival early during infection (PubMed:25187516). In vitro, dephosphorylates two subunits of the trifunctional enzyme TFP (ECHA/ ECHB), which means that it may also affect pathways involved in cell energy metabolism (PubMed:25743628). Furthermore, blocks innate immune system responses mediated by the host adapter TAB3 and dependent on NF-kappa-B by competitively binding the ubiquitin-interacting domain of TAB3, in a phosphatase activity-independent manner (PubMed:25642820). Antagonizes TRIM27-promoted JNK/p38 MAPK pathway activation and cell apoptosis through competitively binding to the RING domain of TRIM27 (PubMed:27698396). In addition, PtpA enters the nucleus of host cells and regulates the expression of several host genes, some of which are known to be involved in host innate immunity or in cell proliferation and migration, either by directly binding to the promoters of its target genes, or in an indirect manner (PubMed:28811474). In vitro, can bind directly to the promoter region of GADD45A, a gene encoding a protein involved in cell division, cell death and senescence, and DNA-damage repair (PubMed:28811474).</text>
</comment>
<comment type="catalytic activity">
    <reaction evidence="1 2 5 14 21">
        <text>O-phospho-L-tyrosyl-[protein] + H2O = L-tyrosyl-[protein] + phosphate</text>
        <dbReference type="Rhea" id="RHEA:10684"/>
        <dbReference type="Rhea" id="RHEA-COMP:10136"/>
        <dbReference type="Rhea" id="RHEA-COMP:20101"/>
        <dbReference type="ChEBI" id="CHEBI:15377"/>
        <dbReference type="ChEBI" id="CHEBI:43474"/>
        <dbReference type="ChEBI" id="CHEBI:46858"/>
        <dbReference type="ChEBI" id="CHEBI:61978"/>
        <dbReference type="EC" id="3.1.3.48"/>
    </reaction>
    <physiologicalReaction direction="left-to-right" evidence="1 2 5 14 21">
        <dbReference type="Rhea" id="RHEA:10685"/>
    </physiologicalReaction>
</comment>
<comment type="activity regulation">
    <text evidence="1 5 10 14 16 21">Phosphatase activity is stimulated by phosphorylation (PubMed:25535696). Inhibited by sodium molybdate, sodium orthovanadate and sodium tungstate (PubMed:10986245, PubMed:17975835). Inhibited by S-nitrosylation (PubMed:20830431, PubMed:23102706). Subjected to substrate activation, triggered by pNPP or by phosphotyrosine. Is also activated by phosphoserine, with serine being ineffective in enhancing PtpA activity (PubMed:32142609).</text>
</comment>
<comment type="biophysicochemical properties">
    <kinetics>
        <KM evidence="2">0.402 mM for free O-phosphotyrosine</KM>
        <KM evidence="21">5.4 mM for phosphotyrosine</KM>
        <KM evidence="2">0.131 mM for O-phosphotyrosine peptide</KM>
        <KM evidence="2">0.026 mM for myelin basic protein</KM>
        <KM evidence="5">3.21 mM for pNPP (at pH 5.0)</KM>
        <KM evidence="5">2.96 mM for pNPP (at pH 6.0)</KM>
        <KM evidence="5">2.86 mM for pNPP (at pH 7.0)</KM>
        <KM evidence="14">1.44 mM for pNPP</KM>
        <KM evidence="21">6.1 mM for pNPP</KM>
        <KM evidence="14">1.33 mM for pNPP (in the presence of S-nitrosoglutathione)</KM>
        <Vmax evidence="2">1.688 umol/min/mg enzyme with free O-phosphotyrosine as substrate</Vmax>
        <Vmax evidence="2">0.095 umol/min/mg enzyme with O-phosphotyrosine peptide as substrate</Vmax>
        <Vmax evidence="2">0.03 umol/min/mg enzyme with myelin basic protein as substrate</Vmax>
        <Vmax evidence="14">41.15 umol/min/mg enzyme with pNPP as substrate</Vmax>
        <Vmax evidence="14">20.12 umol/min/mg enzyme with pNPP as substrate (in the presence of S-nitrosoglutathione)</Vmax>
        <text evidence="5 14 21">kcat is 12.6 sec(-1) with pNPP as substrate at pH 5.0. kcat is 1313 sec(-1) with pNPP as substrate at pH 6.0. kcat is 1334 sec(-1) with pNPP as substrate at pH 7.0 (PubMed:17975835). kcat is 13.73 sec(-1) with pNPP as substrate. kcat is 6.71 sec(-1) with pNPP as substrate (in the presence of S-nitrosoglutathione) (PubMed:23102706). kcat is 0.87 sec(-1) with pNPP as substrate. kcat is 0.69 sec(-1) with phosphotyrosine as substrate (PubMed:32142609).</text>
    </kinetics>
</comment>
<comment type="subunit">
    <text evidence="6 11 15 17 19 22">Interacts with the host VPS33B protein in macrophages (PubMed:18474358). Interacts with subunit H of host V-ATPase (PubMed:22087003). Interacts with host GSK-3 alpha (PubMed:25187516). Interacts (via UIM-like region) with host ubiquitin (PubMed:25642820, PubMed:36227980). Interacts with host adapter TAB3 (PubMed:25642820). Interacts with host TRIM27 (PubMed:27698396).</text>
</comment>
<comment type="subcellular location">
    <subcellularLocation>
        <location evidence="1 2 6">Secreted</location>
    </subcellularLocation>
    <subcellularLocation>
        <location evidence="6">Host cytoplasmic vesicle</location>
        <location evidence="6">Host phagosome</location>
    </subcellularLocation>
    <subcellularLocation>
        <location evidence="6 20">Host cytoplasm</location>
    </subcellularLocation>
    <subcellularLocation>
        <location evidence="20">Host nucleus</location>
    </subcellularLocation>
    <text evidence="6">Translocates into the host cytosol by crossing the host phagosomal membrane during human macrophage infection. Colocalizes with host VPS33B in macrophage cytosol and associates with phagosomes.</text>
</comment>
<comment type="induction">
    <text evidence="2">Up-regulated upon infection of human monocytes.</text>
</comment>
<comment type="domain">
    <text evidence="22">The UIM-like region mediates binding to host ubiquitin.</text>
</comment>
<comment type="domain">
    <text evidence="13 21">The activation most likely occurs via a reversible conformational rearrangement of the enzyme, leading to a catalytically competent form (PubMed:32142609). Both the P- and D-loop form part of the binding interface (PubMed:22888002).</text>
</comment>
<comment type="PTM">
    <text evidence="8 13 16">Phosphorylated on tyrosines 128 and 129 by PtkA (PubMed:19366344, PubMed:22888002, PubMed:25535696). Both Tyr-128 and Tyr-129 together are essential for PtpA phosphatase activity (PubMed:25535696). In vitro, can be phosphorylated by several eukaryotic-like Ser/Thr protein kinases, such as protein kinase A (PknA), which phosphorylates PtpA at Thr-45 and increases its activity (PubMed:25535696).</text>
</comment>
<comment type="PTM">
    <text evidence="10 14">S-nitrosylation at Cys-53 decreases activity (PubMed:20830431). Modification does not affect substrate affinity, but decreases protein thermal stability and promotes a local effect in the surroundings of the Cys-53 residue, which interferes in both protein stability and function (PubMed:23102706).</text>
</comment>
<comment type="disruption phenotype">
    <text evidence="6 7">Deletion mutant is attenuated in human macrophages (PubMed:18474358). The mutant is not defective when grown in vitro and also shows no growth defect in a mouse infection model (PubMed:18752626).</text>
</comment>
<comment type="biotechnology">
    <text evidence="4 9 12">The important role played by PtpA in virulence makes it a highly promising target for the treatment of tuberculosis infections. Several classes of potent inhibitors have been developed and studied to date. Drug candidates include, among others, stevastelins, roseophilins, prodigiosins, hydroxypyrrole benzoic acids, difluoromethylphosphonic acid (DFMP) and chalcone derivatives.</text>
</comment>
<comment type="similarity">
    <text evidence="27">Belongs to the low molecular weight phosphotyrosine protein phosphatase family.</text>
</comment>
<name>PTPA_MYCTU</name>